<feature type="chain" id="PRO_0000175005" description="Thymidine kinase">
    <location>
        <begin position="1"/>
        <end position="204"/>
    </location>
</feature>
<feature type="active site" description="Proton acceptor" evidence="1">
    <location>
        <position position="96"/>
    </location>
</feature>
<feature type="binding site" evidence="1">
    <location>
        <begin position="23"/>
        <end position="30"/>
    </location>
    <ligand>
        <name>ATP</name>
        <dbReference type="ChEBI" id="CHEBI:30616"/>
    </ligand>
</feature>
<feature type="binding site" evidence="1">
    <location>
        <begin position="95"/>
        <end position="98"/>
    </location>
    <ligand>
        <name>ATP</name>
        <dbReference type="ChEBI" id="CHEBI:30616"/>
    </ligand>
</feature>
<feature type="binding site" evidence="1">
    <location>
        <position position="152"/>
    </location>
    <ligand>
        <name>Zn(2+)</name>
        <dbReference type="ChEBI" id="CHEBI:29105"/>
    </ligand>
</feature>
<feature type="binding site" evidence="1">
    <location>
        <position position="155"/>
    </location>
    <ligand>
        <name>Zn(2+)</name>
        <dbReference type="ChEBI" id="CHEBI:29105"/>
    </ligand>
</feature>
<feature type="binding site" evidence="1">
    <location>
        <position position="184"/>
    </location>
    <ligand>
        <name>Zn(2+)</name>
        <dbReference type="ChEBI" id="CHEBI:29105"/>
    </ligand>
</feature>
<feature type="binding site" evidence="1">
    <location>
        <position position="187"/>
    </location>
    <ligand>
        <name>Zn(2+)</name>
        <dbReference type="ChEBI" id="CHEBI:29105"/>
    </ligand>
</feature>
<accession>Q7MVV7</accession>
<proteinExistence type="inferred from homology"/>
<name>KITH_PORGI</name>
<keyword id="KW-0067">ATP-binding</keyword>
<keyword id="KW-0963">Cytoplasm</keyword>
<keyword id="KW-0237">DNA synthesis</keyword>
<keyword id="KW-0418">Kinase</keyword>
<keyword id="KW-0479">Metal-binding</keyword>
<keyword id="KW-0547">Nucleotide-binding</keyword>
<keyword id="KW-1185">Reference proteome</keyword>
<keyword id="KW-0808">Transferase</keyword>
<keyword id="KW-0862">Zinc</keyword>
<comment type="catalytic activity">
    <reaction evidence="1">
        <text>thymidine + ATP = dTMP + ADP + H(+)</text>
        <dbReference type="Rhea" id="RHEA:19129"/>
        <dbReference type="ChEBI" id="CHEBI:15378"/>
        <dbReference type="ChEBI" id="CHEBI:17748"/>
        <dbReference type="ChEBI" id="CHEBI:30616"/>
        <dbReference type="ChEBI" id="CHEBI:63528"/>
        <dbReference type="ChEBI" id="CHEBI:456216"/>
        <dbReference type="EC" id="2.7.1.21"/>
    </reaction>
</comment>
<comment type="subunit">
    <text evidence="1">Homotetramer.</text>
</comment>
<comment type="subcellular location">
    <subcellularLocation>
        <location evidence="1">Cytoplasm</location>
    </subcellularLocation>
</comment>
<comment type="similarity">
    <text evidence="1">Belongs to the thymidine kinase family.</text>
</comment>
<sequence>MDYEIENNHADSIRRGSIEVICGSMFSGKTEELLRRLRRAKIARQTVEIFKPTIDIRYDETDVVSHDKNAIASTPVDNSANILLLSSQVDVVGIDEAQFFDEGLVEVAQQLADQGVRVVIAGLDMDFRRQPFGPMPGLCAIADSVTKVHAVCVECGRLASYSFRRVQGDQQVMLGELNEYSPLCRTCYRKCSSPPQTEEIHSTI</sequence>
<organism>
    <name type="scientific">Porphyromonas gingivalis (strain ATCC BAA-308 / W83)</name>
    <dbReference type="NCBI Taxonomy" id="242619"/>
    <lineage>
        <taxon>Bacteria</taxon>
        <taxon>Pseudomonadati</taxon>
        <taxon>Bacteroidota</taxon>
        <taxon>Bacteroidia</taxon>
        <taxon>Bacteroidales</taxon>
        <taxon>Porphyromonadaceae</taxon>
        <taxon>Porphyromonas</taxon>
    </lineage>
</organism>
<dbReference type="EC" id="2.7.1.21" evidence="1"/>
<dbReference type="EMBL" id="AE015924">
    <property type="protein sequence ID" value="AAQ66060.1"/>
    <property type="molecule type" value="Genomic_DNA"/>
</dbReference>
<dbReference type="RefSeq" id="WP_004584156.1">
    <property type="nucleotide sequence ID" value="NC_002950.2"/>
</dbReference>
<dbReference type="SMR" id="Q7MVV7"/>
<dbReference type="STRING" id="242619.PG_0925"/>
<dbReference type="EnsemblBacteria" id="AAQ66060">
    <property type="protein sequence ID" value="AAQ66060"/>
    <property type="gene ID" value="PG_0925"/>
</dbReference>
<dbReference type="KEGG" id="pgi:PG_0925"/>
<dbReference type="eggNOG" id="COG1435">
    <property type="taxonomic scope" value="Bacteria"/>
</dbReference>
<dbReference type="HOGENOM" id="CLU_064400_3_0_10"/>
<dbReference type="Proteomes" id="UP000000588">
    <property type="component" value="Chromosome"/>
</dbReference>
<dbReference type="GO" id="GO:0005829">
    <property type="term" value="C:cytosol"/>
    <property type="evidence" value="ECO:0007669"/>
    <property type="project" value="TreeGrafter"/>
</dbReference>
<dbReference type="GO" id="GO:0005524">
    <property type="term" value="F:ATP binding"/>
    <property type="evidence" value="ECO:0007669"/>
    <property type="project" value="UniProtKB-UniRule"/>
</dbReference>
<dbReference type="GO" id="GO:0004797">
    <property type="term" value="F:thymidine kinase activity"/>
    <property type="evidence" value="ECO:0007669"/>
    <property type="project" value="UniProtKB-UniRule"/>
</dbReference>
<dbReference type="GO" id="GO:0008270">
    <property type="term" value="F:zinc ion binding"/>
    <property type="evidence" value="ECO:0007669"/>
    <property type="project" value="UniProtKB-UniRule"/>
</dbReference>
<dbReference type="GO" id="GO:0071897">
    <property type="term" value="P:DNA biosynthetic process"/>
    <property type="evidence" value="ECO:0007669"/>
    <property type="project" value="UniProtKB-KW"/>
</dbReference>
<dbReference type="GO" id="GO:0046104">
    <property type="term" value="P:thymidine metabolic process"/>
    <property type="evidence" value="ECO:0007669"/>
    <property type="project" value="TreeGrafter"/>
</dbReference>
<dbReference type="FunFam" id="3.40.50.300:FF:000384">
    <property type="entry name" value="Thymidine kinase"/>
    <property type="match status" value="1"/>
</dbReference>
<dbReference type="Gene3D" id="3.30.60.20">
    <property type="match status" value="1"/>
</dbReference>
<dbReference type="Gene3D" id="3.40.50.300">
    <property type="entry name" value="P-loop containing nucleotide triphosphate hydrolases"/>
    <property type="match status" value="1"/>
</dbReference>
<dbReference type="HAMAP" id="MF_00124">
    <property type="entry name" value="Thymidine_kinase"/>
    <property type="match status" value="1"/>
</dbReference>
<dbReference type="InterPro" id="IPR027417">
    <property type="entry name" value="P-loop_NTPase"/>
</dbReference>
<dbReference type="InterPro" id="IPR001267">
    <property type="entry name" value="Thymidine_kinase"/>
</dbReference>
<dbReference type="NCBIfam" id="NF003296">
    <property type="entry name" value="PRK04296.1-1"/>
    <property type="match status" value="1"/>
</dbReference>
<dbReference type="PANTHER" id="PTHR11441">
    <property type="entry name" value="THYMIDINE KINASE"/>
    <property type="match status" value="1"/>
</dbReference>
<dbReference type="PANTHER" id="PTHR11441:SF0">
    <property type="entry name" value="THYMIDINE KINASE, CYTOSOLIC"/>
    <property type="match status" value="1"/>
</dbReference>
<dbReference type="Pfam" id="PF00265">
    <property type="entry name" value="TK"/>
    <property type="match status" value="1"/>
</dbReference>
<dbReference type="PIRSF" id="PIRSF035805">
    <property type="entry name" value="TK_cell"/>
    <property type="match status" value="1"/>
</dbReference>
<dbReference type="SUPFAM" id="SSF57716">
    <property type="entry name" value="Glucocorticoid receptor-like (DNA-binding domain)"/>
    <property type="match status" value="1"/>
</dbReference>
<dbReference type="SUPFAM" id="SSF52540">
    <property type="entry name" value="P-loop containing nucleoside triphosphate hydrolases"/>
    <property type="match status" value="1"/>
</dbReference>
<evidence type="ECO:0000255" key="1">
    <source>
        <dbReference type="HAMAP-Rule" id="MF_00124"/>
    </source>
</evidence>
<protein>
    <recommendedName>
        <fullName evidence="1">Thymidine kinase</fullName>
        <ecNumber evidence="1">2.7.1.21</ecNumber>
    </recommendedName>
</protein>
<reference key="1">
    <citation type="journal article" date="2003" name="J. Bacteriol.">
        <title>Complete genome sequence of the oral pathogenic bacterium Porphyromonas gingivalis strain W83.</title>
        <authorList>
            <person name="Nelson K.E."/>
            <person name="Fleischmann R.D."/>
            <person name="DeBoy R.T."/>
            <person name="Paulsen I.T."/>
            <person name="Fouts D.E."/>
            <person name="Eisen J.A."/>
            <person name="Daugherty S.C."/>
            <person name="Dodson R.J."/>
            <person name="Durkin A.S."/>
            <person name="Gwinn M.L."/>
            <person name="Haft D.H."/>
            <person name="Kolonay J.F."/>
            <person name="Nelson W.C."/>
            <person name="Mason T.M."/>
            <person name="Tallon L."/>
            <person name="Gray J."/>
            <person name="Granger D."/>
            <person name="Tettelin H."/>
            <person name="Dong H."/>
            <person name="Galvin J.L."/>
            <person name="Duncan M.J."/>
            <person name="Dewhirst F.E."/>
            <person name="Fraser C.M."/>
        </authorList>
    </citation>
    <scope>NUCLEOTIDE SEQUENCE [LARGE SCALE GENOMIC DNA]</scope>
    <source>
        <strain>ATCC BAA-308 / W83</strain>
    </source>
</reference>
<gene>
    <name evidence="1" type="primary">tdk</name>
    <name type="ordered locus">PG_0925</name>
</gene>